<proteinExistence type="inferred from homology"/>
<name>MURC_PECCP</name>
<evidence type="ECO:0000255" key="1">
    <source>
        <dbReference type="HAMAP-Rule" id="MF_00046"/>
    </source>
</evidence>
<protein>
    <recommendedName>
        <fullName evidence="1">UDP-N-acetylmuramate--L-alanine ligase</fullName>
        <ecNumber evidence="1">6.3.2.8</ecNumber>
    </recommendedName>
    <alternativeName>
        <fullName evidence="1">UDP-N-acetylmuramoyl-L-alanine synthetase</fullName>
    </alternativeName>
</protein>
<sequence length="486" mass="52967">MNTQQLAKLRSIVPEMHRVRHIHFVGIGGAGMGGIAEVLANEGYEISGSDLAPNAVTQQLTELGAQIYFHHRAENVLNASVVVVSSAITADNPEIVAAHDARIPVIRRAEMLAELMRFRHGIAIAGTHGKTTTTAMVTSIYAEAGLDPTFVNGGLVKAAGTHARLGSSRYLIAEADESDASFLHLQPMVAIVTNIEADHMDTYQGDFENLKQTFINFLHNLPFYGQAVMCIDDAVIRELLPRVGRHITTYGFSDDADVRVSGYRQVGAQGHFTLERKDKPLLTVTLNAPGRHNALNAAAAVAVATDEGIDDEAILRALERFQGTGRRFDFLGEYPLELVNGQSGTAMLVDDYGHHPTEVDATIKAARAGWPDKRLVMIFQPHRYTRTRDLYDDFAHVLSQVDVLLMLDVYSAGESPIPGADSRSLCRTIRGRGKIDPILVTDVDTLPELLSQALRGEDLILVQGAGNIGKLARKLADSRLQPQISE</sequence>
<gene>
    <name evidence="1" type="primary">murC</name>
    <name type="ordered locus">PC1_3591</name>
</gene>
<accession>C6DEU2</accession>
<keyword id="KW-0067">ATP-binding</keyword>
<keyword id="KW-0131">Cell cycle</keyword>
<keyword id="KW-0132">Cell division</keyword>
<keyword id="KW-0133">Cell shape</keyword>
<keyword id="KW-0961">Cell wall biogenesis/degradation</keyword>
<keyword id="KW-0963">Cytoplasm</keyword>
<keyword id="KW-0436">Ligase</keyword>
<keyword id="KW-0547">Nucleotide-binding</keyword>
<keyword id="KW-0573">Peptidoglycan synthesis</keyword>
<reference key="1">
    <citation type="submission" date="2009-07" db="EMBL/GenBank/DDBJ databases">
        <title>Complete sequence of Pectobacterium carotovorum subsp. carotovorum PC1.</title>
        <authorList>
            <consortium name="US DOE Joint Genome Institute"/>
            <person name="Lucas S."/>
            <person name="Copeland A."/>
            <person name="Lapidus A."/>
            <person name="Glavina del Rio T."/>
            <person name="Tice H."/>
            <person name="Bruce D."/>
            <person name="Goodwin L."/>
            <person name="Pitluck S."/>
            <person name="Munk A.C."/>
            <person name="Brettin T."/>
            <person name="Detter J.C."/>
            <person name="Han C."/>
            <person name="Tapia R."/>
            <person name="Larimer F."/>
            <person name="Land M."/>
            <person name="Hauser L."/>
            <person name="Kyrpides N."/>
            <person name="Mikhailova N."/>
            <person name="Balakrishnan V."/>
            <person name="Glasner J."/>
            <person name="Perna N.T."/>
        </authorList>
    </citation>
    <scope>NUCLEOTIDE SEQUENCE [LARGE SCALE GENOMIC DNA]</scope>
    <source>
        <strain>PC1</strain>
    </source>
</reference>
<organism>
    <name type="scientific">Pectobacterium carotovorum subsp. carotovorum (strain PC1)</name>
    <dbReference type="NCBI Taxonomy" id="561230"/>
    <lineage>
        <taxon>Bacteria</taxon>
        <taxon>Pseudomonadati</taxon>
        <taxon>Pseudomonadota</taxon>
        <taxon>Gammaproteobacteria</taxon>
        <taxon>Enterobacterales</taxon>
        <taxon>Pectobacteriaceae</taxon>
        <taxon>Pectobacterium</taxon>
    </lineage>
</organism>
<feature type="chain" id="PRO_1000202185" description="UDP-N-acetylmuramate--L-alanine ligase">
    <location>
        <begin position="1"/>
        <end position="486"/>
    </location>
</feature>
<feature type="binding site" evidence="1">
    <location>
        <begin position="126"/>
        <end position="132"/>
    </location>
    <ligand>
        <name>ATP</name>
        <dbReference type="ChEBI" id="CHEBI:30616"/>
    </ligand>
</feature>
<comment type="function">
    <text evidence="1">Cell wall formation.</text>
</comment>
<comment type="catalytic activity">
    <reaction evidence="1">
        <text>UDP-N-acetyl-alpha-D-muramate + L-alanine + ATP = UDP-N-acetyl-alpha-D-muramoyl-L-alanine + ADP + phosphate + H(+)</text>
        <dbReference type="Rhea" id="RHEA:23372"/>
        <dbReference type="ChEBI" id="CHEBI:15378"/>
        <dbReference type="ChEBI" id="CHEBI:30616"/>
        <dbReference type="ChEBI" id="CHEBI:43474"/>
        <dbReference type="ChEBI" id="CHEBI:57972"/>
        <dbReference type="ChEBI" id="CHEBI:70757"/>
        <dbReference type="ChEBI" id="CHEBI:83898"/>
        <dbReference type="ChEBI" id="CHEBI:456216"/>
        <dbReference type="EC" id="6.3.2.8"/>
    </reaction>
</comment>
<comment type="pathway">
    <text evidence="1">Cell wall biogenesis; peptidoglycan biosynthesis.</text>
</comment>
<comment type="subcellular location">
    <subcellularLocation>
        <location evidence="1">Cytoplasm</location>
    </subcellularLocation>
</comment>
<comment type="similarity">
    <text evidence="1">Belongs to the MurCDEF family.</text>
</comment>
<dbReference type="EC" id="6.3.2.8" evidence="1"/>
<dbReference type="EMBL" id="CP001657">
    <property type="protein sequence ID" value="ACT14606.1"/>
    <property type="molecule type" value="Genomic_DNA"/>
</dbReference>
<dbReference type="RefSeq" id="WP_015841724.1">
    <property type="nucleotide sequence ID" value="NC_012917.1"/>
</dbReference>
<dbReference type="SMR" id="C6DEU2"/>
<dbReference type="STRING" id="561230.PC1_3591"/>
<dbReference type="KEGG" id="pct:PC1_3591"/>
<dbReference type="eggNOG" id="COG0773">
    <property type="taxonomic scope" value="Bacteria"/>
</dbReference>
<dbReference type="HOGENOM" id="CLU_028104_2_2_6"/>
<dbReference type="OrthoDB" id="9804126at2"/>
<dbReference type="UniPathway" id="UPA00219"/>
<dbReference type="Proteomes" id="UP000002736">
    <property type="component" value="Chromosome"/>
</dbReference>
<dbReference type="GO" id="GO:0005737">
    <property type="term" value="C:cytoplasm"/>
    <property type="evidence" value="ECO:0007669"/>
    <property type="project" value="UniProtKB-SubCell"/>
</dbReference>
<dbReference type="GO" id="GO:0005524">
    <property type="term" value="F:ATP binding"/>
    <property type="evidence" value="ECO:0007669"/>
    <property type="project" value="UniProtKB-UniRule"/>
</dbReference>
<dbReference type="GO" id="GO:0008763">
    <property type="term" value="F:UDP-N-acetylmuramate-L-alanine ligase activity"/>
    <property type="evidence" value="ECO:0007669"/>
    <property type="project" value="UniProtKB-UniRule"/>
</dbReference>
<dbReference type="GO" id="GO:0051301">
    <property type="term" value="P:cell division"/>
    <property type="evidence" value="ECO:0007669"/>
    <property type="project" value="UniProtKB-KW"/>
</dbReference>
<dbReference type="GO" id="GO:0071555">
    <property type="term" value="P:cell wall organization"/>
    <property type="evidence" value="ECO:0007669"/>
    <property type="project" value="UniProtKB-KW"/>
</dbReference>
<dbReference type="GO" id="GO:0009252">
    <property type="term" value="P:peptidoglycan biosynthetic process"/>
    <property type="evidence" value="ECO:0007669"/>
    <property type="project" value="UniProtKB-UniRule"/>
</dbReference>
<dbReference type="GO" id="GO:0008360">
    <property type="term" value="P:regulation of cell shape"/>
    <property type="evidence" value="ECO:0007669"/>
    <property type="project" value="UniProtKB-KW"/>
</dbReference>
<dbReference type="FunFam" id="3.40.1190.10:FF:000001">
    <property type="entry name" value="UDP-N-acetylmuramate--L-alanine ligase"/>
    <property type="match status" value="1"/>
</dbReference>
<dbReference type="FunFam" id="3.40.50.720:FF:000046">
    <property type="entry name" value="UDP-N-acetylmuramate--L-alanine ligase"/>
    <property type="match status" value="1"/>
</dbReference>
<dbReference type="FunFam" id="3.90.190.20:FF:000001">
    <property type="entry name" value="UDP-N-acetylmuramate--L-alanine ligase"/>
    <property type="match status" value="1"/>
</dbReference>
<dbReference type="Gene3D" id="3.90.190.20">
    <property type="entry name" value="Mur ligase, C-terminal domain"/>
    <property type="match status" value="1"/>
</dbReference>
<dbReference type="Gene3D" id="3.40.1190.10">
    <property type="entry name" value="Mur-like, catalytic domain"/>
    <property type="match status" value="1"/>
</dbReference>
<dbReference type="Gene3D" id="3.40.50.720">
    <property type="entry name" value="NAD(P)-binding Rossmann-like Domain"/>
    <property type="match status" value="1"/>
</dbReference>
<dbReference type="HAMAP" id="MF_00046">
    <property type="entry name" value="MurC"/>
    <property type="match status" value="1"/>
</dbReference>
<dbReference type="InterPro" id="IPR036565">
    <property type="entry name" value="Mur-like_cat_sf"/>
</dbReference>
<dbReference type="InterPro" id="IPR004101">
    <property type="entry name" value="Mur_ligase_C"/>
</dbReference>
<dbReference type="InterPro" id="IPR036615">
    <property type="entry name" value="Mur_ligase_C_dom_sf"/>
</dbReference>
<dbReference type="InterPro" id="IPR013221">
    <property type="entry name" value="Mur_ligase_cen"/>
</dbReference>
<dbReference type="InterPro" id="IPR000713">
    <property type="entry name" value="Mur_ligase_N"/>
</dbReference>
<dbReference type="InterPro" id="IPR050061">
    <property type="entry name" value="MurCDEF_pg_biosynth"/>
</dbReference>
<dbReference type="InterPro" id="IPR005758">
    <property type="entry name" value="UDP-N-AcMur_Ala_ligase_MurC"/>
</dbReference>
<dbReference type="NCBIfam" id="TIGR01082">
    <property type="entry name" value="murC"/>
    <property type="match status" value="1"/>
</dbReference>
<dbReference type="PANTHER" id="PTHR43445:SF3">
    <property type="entry name" value="UDP-N-ACETYLMURAMATE--L-ALANINE LIGASE"/>
    <property type="match status" value="1"/>
</dbReference>
<dbReference type="PANTHER" id="PTHR43445">
    <property type="entry name" value="UDP-N-ACETYLMURAMATE--L-ALANINE LIGASE-RELATED"/>
    <property type="match status" value="1"/>
</dbReference>
<dbReference type="Pfam" id="PF01225">
    <property type="entry name" value="Mur_ligase"/>
    <property type="match status" value="1"/>
</dbReference>
<dbReference type="Pfam" id="PF02875">
    <property type="entry name" value="Mur_ligase_C"/>
    <property type="match status" value="1"/>
</dbReference>
<dbReference type="Pfam" id="PF08245">
    <property type="entry name" value="Mur_ligase_M"/>
    <property type="match status" value="1"/>
</dbReference>
<dbReference type="SUPFAM" id="SSF51984">
    <property type="entry name" value="MurCD N-terminal domain"/>
    <property type="match status" value="1"/>
</dbReference>
<dbReference type="SUPFAM" id="SSF53623">
    <property type="entry name" value="MurD-like peptide ligases, catalytic domain"/>
    <property type="match status" value="1"/>
</dbReference>
<dbReference type="SUPFAM" id="SSF53244">
    <property type="entry name" value="MurD-like peptide ligases, peptide-binding domain"/>
    <property type="match status" value="1"/>
</dbReference>